<proteinExistence type="inferred from homology"/>
<keyword id="KW-0030">Aminoacyl-tRNA synthetase</keyword>
<keyword id="KW-0067">ATP-binding</keyword>
<keyword id="KW-0963">Cytoplasm</keyword>
<keyword id="KW-0436">Ligase</keyword>
<keyword id="KW-0547">Nucleotide-binding</keyword>
<keyword id="KW-0648">Protein biosynthesis</keyword>
<protein>
    <recommendedName>
        <fullName evidence="1">Leucine--tRNA ligase</fullName>
        <ecNumber evidence="1">6.1.1.4</ecNumber>
    </recommendedName>
    <alternativeName>
        <fullName evidence="1">Leucyl-tRNA synthetase</fullName>
        <shortName evidence="1">LeuRS</shortName>
    </alternativeName>
</protein>
<organism>
    <name type="scientific">Janthinobacterium sp. (strain Marseille)</name>
    <name type="common">Minibacterium massiliensis</name>
    <dbReference type="NCBI Taxonomy" id="375286"/>
    <lineage>
        <taxon>Bacteria</taxon>
        <taxon>Pseudomonadati</taxon>
        <taxon>Pseudomonadota</taxon>
        <taxon>Betaproteobacteria</taxon>
        <taxon>Burkholderiales</taxon>
        <taxon>Oxalobacteraceae</taxon>
        <taxon>Janthinobacterium</taxon>
    </lineage>
</organism>
<comment type="catalytic activity">
    <reaction evidence="1">
        <text>tRNA(Leu) + L-leucine + ATP = L-leucyl-tRNA(Leu) + AMP + diphosphate</text>
        <dbReference type="Rhea" id="RHEA:11688"/>
        <dbReference type="Rhea" id="RHEA-COMP:9613"/>
        <dbReference type="Rhea" id="RHEA-COMP:9622"/>
        <dbReference type="ChEBI" id="CHEBI:30616"/>
        <dbReference type="ChEBI" id="CHEBI:33019"/>
        <dbReference type="ChEBI" id="CHEBI:57427"/>
        <dbReference type="ChEBI" id="CHEBI:78442"/>
        <dbReference type="ChEBI" id="CHEBI:78494"/>
        <dbReference type="ChEBI" id="CHEBI:456215"/>
        <dbReference type="EC" id="6.1.1.4"/>
    </reaction>
</comment>
<comment type="subcellular location">
    <subcellularLocation>
        <location evidence="1">Cytoplasm</location>
    </subcellularLocation>
</comment>
<comment type="similarity">
    <text evidence="1">Belongs to the class-I aminoacyl-tRNA synthetase family.</text>
</comment>
<gene>
    <name evidence="1" type="primary">leuS</name>
    <name type="ordered locus">mma_2896</name>
</gene>
<reference key="1">
    <citation type="journal article" date="2007" name="PLoS Genet.">
        <title>Genome analysis of Minibacterium massiliensis highlights the convergent evolution of water-living bacteria.</title>
        <authorList>
            <person name="Audic S."/>
            <person name="Robert C."/>
            <person name="Campagna B."/>
            <person name="Parinello H."/>
            <person name="Claverie J.-M."/>
            <person name="Raoult D."/>
            <person name="Drancourt M."/>
        </authorList>
    </citation>
    <scope>NUCLEOTIDE SEQUENCE [LARGE SCALE GENOMIC DNA]</scope>
    <source>
        <strain>Marseille</strain>
    </source>
</reference>
<evidence type="ECO:0000255" key="1">
    <source>
        <dbReference type="HAMAP-Rule" id="MF_00049"/>
    </source>
</evidence>
<sequence>MQDKYSPAEVEKSAHDHWQAIDAYKAVENAKDKNGKDKKKFYACSMLPYPSGKLHMGHVRNYTINDVMYRYLRMNGYNVLMPMGWDAFGMPAENAAMANNVPPAQWTYANIDYMKTQMASMGLAIDWSREMTACRPEYYKWNQWMFLKMLEKGIIYKKTGTVNWDPIDQTVLANEQVIDGRGWRSGALIEKREIPMYYARITDYAEELLDHVDNKLPGWPERVRIMQSNWIGKSTGVRFAFTHDIAEEGKLINDGKLWVFTTRADTIKGVTFCAVAPEHALATFAAKSNPELTDFIAECKLGSVIEADMATMEKKGMPTGLFVKHPLTGQLVEVWVGNYVLITYGDGAVMGVPAHDERDFAFAQKYVLPIHPVIDVPGKTFSDVAWHEWYGDKENGRCINSGKYDGLNYQQAVDAIAADLAELGLGEKKITYRLRDWGISRQRYWGTPIPIIHCKDCGDVPVPEKDLPVVLPEDCVPDGSGNPLNKHEKFLHVDCPQCGKPARRETDTMDTFVDSSWYYMRYCSPNSSDAMVDSRNDYWMPMDQYIGGIEHAVLHLLYARFWTKVMRDFGLVKFDEPFTNLLTQGMVLNETYFREDASGKKTWFNPADVQLQLDDKGRPVSAVLSSDGKAVEIGGTEKMSKSKNNGIDPQAQIDQYGADTARLFTMFASPPEQTLEWSGAGVEGANRFLRRVWAYGYNQAARVANASAFDFATLPEAHKALRRETHKILQQADNDYKRIQYNTVVSASMKMLNTLEAAKLDDSPASNAVISEGLSIFLRILNPVAPHITHALWQELGFAKDHGDILDAPWPQVDPAALEQAEIEMMIQVNGKLRGSIIVAKDADKASIEAAALANESVQKFIEGTPKKIIVVPGKLVNIVA</sequence>
<accession>A6T239</accession>
<name>SYL_JANMA</name>
<dbReference type="EC" id="6.1.1.4" evidence="1"/>
<dbReference type="EMBL" id="CP000269">
    <property type="protein sequence ID" value="ABR89205.1"/>
    <property type="molecule type" value="Genomic_DNA"/>
</dbReference>
<dbReference type="RefSeq" id="WP_012080745.1">
    <property type="nucleotide sequence ID" value="NC_009659.1"/>
</dbReference>
<dbReference type="SMR" id="A6T239"/>
<dbReference type="STRING" id="375286.mma_2896"/>
<dbReference type="KEGG" id="mms:mma_2896"/>
<dbReference type="eggNOG" id="COG0495">
    <property type="taxonomic scope" value="Bacteria"/>
</dbReference>
<dbReference type="HOGENOM" id="CLU_004427_0_0_4"/>
<dbReference type="OrthoDB" id="9810365at2"/>
<dbReference type="Proteomes" id="UP000006388">
    <property type="component" value="Chromosome"/>
</dbReference>
<dbReference type="GO" id="GO:0005829">
    <property type="term" value="C:cytosol"/>
    <property type="evidence" value="ECO:0007669"/>
    <property type="project" value="TreeGrafter"/>
</dbReference>
<dbReference type="GO" id="GO:0002161">
    <property type="term" value="F:aminoacyl-tRNA deacylase activity"/>
    <property type="evidence" value="ECO:0007669"/>
    <property type="project" value="InterPro"/>
</dbReference>
<dbReference type="GO" id="GO:0005524">
    <property type="term" value="F:ATP binding"/>
    <property type="evidence" value="ECO:0007669"/>
    <property type="project" value="UniProtKB-UniRule"/>
</dbReference>
<dbReference type="GO" id="GO:0004823">
    <property type="term" value="F:leucine-tRNA ligase activity"/>
    <property type="evidence" value="ECO:0007669"/>
    <property type="project" value="UniProtKB-UniRule"/>
</dbReference>
<dbReference type="GO" id="GO:0006429">
    <property type="term" value="P:leucyl-tRNA aminoacylation"/>
    <property type="evidence" value="ECO:0007669"/>
    <property type="project" value="UniProtKB-UniRule"/>
</dbReference>
<dbReference type="CDD" id="cd07958">
    <property type="entry name" value="Anticodon_Ia_Leu_BEm"/>
    <property type="match status" value="1"/>
</dbReference>
<dbReference type="FunFam" id="1.10.730.10:FF:000003">
    <property type="entry name" value="Leucine--tRNA ligase"/>
    <property type="match status" value="1"/>
</dbReference>
<dbReference type="FunFam" id="2.20.28.290:FF:000001">
    <property type="entry name" value="Leucine--tRNA ligase"/>
    <property type="match status" value="1"/>
</dbReference>
<dbReference type="FunFam" id="3.10.20.590:FF:000001">
    <property type="entry name" value="Leucine--tRNA ligase"/>
    <property type="match status" value="1"/>
</dbReference>
<dbReference type="FunFam" id="3.40.50.620:FF:000003">
    <property type="entry name" value="Leucine--tRNA ligase"/>
    <property type="match status" value="1"/>
</dbReference>
<dbReference type="FunFam" id="3.40.50.620:FF:000056">
    <property type="entry name" value="Leucine--tRNA ligase"/>
    <property type="match status" value="1"/>
</dbReference>
<dbReference type="FunFam" id="3.90.740.10:FF:000012">
    <property type="entry name" value="Leucine--tRNA ligase"/>
    <property type="match status" value="1"/>
</dbReference>
<dbReference type="Gene3D" id="2.20.28.290">
    <property type="match status" value="1"/>
</dbReference>
<dbReference type="Gene3D" id="3.10.20.590">
    <property type="match status" value="1"/>
</dbReference>
<dbReference type="Gene3D" id="3.40.50.620">
    <property type="entry name" value="HUPs"/>
    <property type="match status" value="2"/>
</dbReference>
<dbReference type="Gene3D" id="1.10.730.10">
    <property type="entry name" value="Isoleucyl-tRNA Synthetase, Domain 1"/>
    <property type="match status" value="1"/>
</dbReference>
<dbReference type="Gene3D" id="3.90.740.10">
    <property type="entry name" value="Valyl/Leucyl/Isoleucyl-tRNA synthetase, editing domain"/>
    <property type="match status" value="1"/>
</dbReference>
<dbReference type="HAMAP" id="MF_00049_B">
    <property type="entry name" value="Leu_tRNA_synth_B"/>
    <property type="match status" value="1"/>
</dbReference>
<dbReference type="InterPro" id="IPR001412">
    <property type="entry name" value="aa-tRNA-synth_I_CS"/>
</dbReference>
<dbReference type="InterPro" id="IPR002300">
    <property type="entry name" value="aa-tRNA-synth_Ia"/>
</dbReference>
<dbReference type="InterPro" id="IPR002302">
    <property type="entry name" value="Leu-tRNA-ligase"/>
</dbReference>
<dbReference type="InterPro" id="IPR025709">
    <property type="entry name" value="Leu_tRNA-synth_edit"/>
</dbReference>
<dbReference type="InterPro" id="IPR013155">
    <property type="entry name" value="M/V/L/I-tRNA-synth_anticd-bd"/>
</dbReference>
<dbReference type="InterPro" id="IPR015413">
    <property type="entry name" value="Methionyl/Leucyl_tRNA_Synth"/>
</dbReference>
<dbReference type="InterPro" id="IPR014729">
    <property type="entry name" value="Rossmann-like_a/b/a_fold"/>
</dbReference>
<dbReference type="InterPro" id="IPR009080">
    <property type="entry name" value="tRNAsynth_Ia_anticodon-bd"/>
</dbReference>
<dbReference type="InterPro" id="IPR009008">
    <property type="entry name" value="Val/Leu/Ile-tRNA-synth_edit"/>
</dbReference>
<dbReference type="NCBIfam" id="TIGR00396">
    <property type="entry name" value="leuS_bact"/>
    <property type="match status" value="1"/>
</dbReference>
<dbReference type="PANTHER" id="PTHR43740:SF2">
    <property type="entry name" value="LEUCINE--TRNA LIGASE, MITOCHONDRIAL"/>
    <property type="match status" value="1"/>
</dbReference>
<dbReference type="PANTHER" id="PTHR43740">
    <property type="entry name" value="LEUCYL-TRNA SYNTHETASE"/>
    <property type="match status" value="1"/>
</dbReference>
<dbReference type="Pfam" id="PF08264">
    <property type="entry name" value="Anticodon_1"/>
    <property type="match status" value="1"/>
</dbReference>
<dbReference type="Pfam" id="PF00133">
    <property type="entry name" value="tRNA-synt_1"/>
    <property type="match status" value="2"/>
</dbReference>
<dbReference type="Pfam" id="PF13603">
    <property type="entry name" value="tRNA-synt_1_2"/>
    <property type="match status" value="1"/>
</dbReference>
<dbReference type="Pfam" id="PF09334">
    <property type="entry name" value="tRNA-synt_1g"/>
    <property type="match status" value="1"/>
</dbReference>
<dbReference type="PRINTS" id="PR00985">
    <property type="entry name" value="TRNASYNTHLEU"/>
</dbReference>
<dbReference type="SUPFAM" id="SSF47323">
    <property type="entry name" value="Anticodon-binding domain of a subclass of class I aminoacyl-tRNA synthetases"/>
    <property type="match status" value="1"/>
</dbReference>
<dbReference type="SUPFAM" id="SSF52374">
    <property type="entry name" value="Nucleotidylyl transferase"/>
    <property type="match status" value="1"/>
</dbReference>
<dbReference type="SUPFAM" id="SSF50677">
    <property type="entry name" value="ValRS/IleRS/LeuRS editing domain"/>
    <property type="match status" value="1"/>
</dbReference>
<dbReference type="PROSITE" id="PS00178">
    <property type="entry name" value="AA_TRNA_LIGASE_I"/>
    <property type="match status" value="1"/>
</dbReference>
<feature type="chain" id="PRO_1000009354" description="Leucine--tRNA ligase">
    <location>
        <begin position="1"/>
        <end position="881"/>
    </location>
</feature>
<feature type="short sequence motif" description="'HIGH' region">
    <location>
        <begin position="48"/>
        <end position="58"/>
    </location>
</feature>
<feature type="short sequence motif" description="'KMSKS' region">
    <location>
        <begin position="638"/>
        <end position="642"/>
    </location>
</feature>
<feature type="binding site" evidence="1">
    <location>
        <position position="641"/>
    </location>
    <ligand>
        <name>ATP</name>
        <dbReference type="ChEBI" id="CHEBI:30616"/>
    </ligand>
</feature>